<dbReference type="EC" id="5.4.3.8" evidence="1"/>
<dbReference type="EMBL" id="CP000776">
    <property type="protein sequence ID" value="ABS51673.1"/>
    <property type="molecule type" value="Genomic_DNA"/>
</dbReference>
<dbReference type="RefSeq" id="WP_012108890.1">
    <property type="nucleotide sequence ID" value="NC_009714.1"/>
</dbReference>
<dbReference type="SMR" id="A7I252"/>
<dbReference type="STRING" id="360107.CHAB381_1034"/>
<dbReference type="KEGG" id="cha:CHAB381_1034"/>
<dbReference type="eggNOG" id="COG0001">
    <property type="taxonomic scope" value="Bacteria"/>
</dbReference>
<dbReference type="HOGENOM" id="CLU_016922_1_5_7"/>
<dbReference type="OrthoDB" id="9801052at2"/>
<dbReference type="UniPathway" id="UPA00251">
    <property type="reaction ID" value="UER00317"/>
</dbReference>
<dbReference type="Proteomes" id="UP000002407">
    <property type="component" value="Chromosome"/>
</dbReference>
<dbReference type="GO" id="GO:0005737">
    <property type="term" value="C:cytoplasm"/>
    <property type="evidence" value="ECO:0007669"/>
    <property type="project" value="UniProtKB-SubCell"/>
</dbReference>
<dbReference type="GO" id="GO:0042286">
    <property type="term" value="F:glutamate-1-semialdehyde 2,1-aminomutase activity"/>
    <property type="evidence" value="ECO:0007669"/>
    <property type="project" value="UniProtKB-UniRule"/>
</dbReference>
<dbReference type="GO" id="GO:0030170">
    <property type="term" value="F:pyridoxal phosphate binding"/>
    <property type="evidence" value="ECO:0007669"/>
    <property type="project" value="InterPro"/>
</dbReference>
<dbReference type="GO" id="GO:0008483">
    <property type="term" value="F:transaminase activity"/>
    <property type="evidence" value="ECO:0007669"/>
    <property type="project" value="InterPro"/>
</dbReference>
<dbReference type="GO" id="GO:0006782">
    <property type="term" value="P:protoporphyrinogen IX biosynthetic process"/>
    <property type="evidence" value="ECO:0007669"/>
    <property type="project" value="UniProtKB-UniRule"/>
</dbReference>
<dbReference type="CDD" id="cd00610">
    <property type="entry name" value="OAT_like"/>
    <property type="match status" value="1"/>
</dbReference>
<dbReference type="FunFam" id="3.40.640.10:FF:000021">
    <property type="entry name" value="Glutamate-1-semialdehyde 2,1-aminomutase"/>
    <property type="match status" value="1"/>
</dbReference>
<dbReference type="Gene3D" id="3.90.1150.10">
    <property type="entry name" value="Aspartate Aminotransferase, domain 1"/>
    <property type="match status" value="1"/>
</dbReference>
<dbReference type="Gene3D" id="3.40.640.10">
    <property type="entry name" value="Type I PLP-dependent aspartate aminotransferase-like (Major domain)"/>
    <property type="match status" value="1"/>
</dbReference>
<dbReference type="HAMAP" id="MF_00375">
    <property type="entry name" value="HemL_aminotrans_3"/>
    <property type="match status" value="1"/>
</dbReference>
<dbReference type="InterPro" id="IPR004639">
    <property type="entry name" value="4pyrrol_synth_GluAld_NH2Trfase"/>
</dbReference>
<dbReference type="InterPro" id="IPR005814">
    <property type="entry name" value="Aminotrans_3"/>
</dbReference>
<dbReference type="InterPro" id="IPR049704">
    <property type="entry name" value="Aminotrans_3_PPA_site"/>
</dbReference>
<dbReference type="InterPro" id="IPR015424">
    <property type="entry name" value="PyrdxlP-dep_Trfase"/>
</dbReference>
<dbReference type="InterPro" id="IPR015421">
    <property type="entry name" value="PyrdxlP-dep_Trfase_major"/>
</dbReference>
<dbReference type="InterPro" id="IPR015422">
    <property type="entry name" value="PyrdxlP-dep_Trfase_small"/>
</dbReference>
<dbReference type="NCBIfam" id="TIGR00713">
    <property type="entry name" value="hemL"/>
    <property type="match status" value="1"/>
</dbReference>
<dbReference type="NCBIfam" id="NF000818">
    <property type="entry name" value="PRK00062.1"/>
    <property type="match status" value="1"/>
</dbReference>
<dbReference type="PANTHER" id="PTHR43713">
    <property type="entry name" value="GLUTAMATE-1-SEMIALDEHYDE 2,1-AMINOMUTASE"/>
    <property type="match status" value="1"/>
</dbReference>
<dbReference type="PANTHER" id="PTHR43713:SF3">
    <property type="entry name" value="GLUTAMATE-1-SEMIALDEHYDE 2,1-AMINOMUTASE 1, CHLOROPLASTIC-RELATED"/>
    <property type="match status" value="1"/>
</dbReference>
<dbReference type="Pfam" id="PF00202">
    <property type="entry name" value="Aminotran_3"/>
    <property type="match status" value="1"/>
</dbReference>
<dbReference type="SUPFAM" id="SSF53383">
    <property type="entry name" value="PLP-dependent transferases"/>
    <property type="match status" value="1"/>
</dbReference>
<dbReference type="PROSITE" id="PS00600">
    <property type="entry name" value="AA_TRANSFER_CLASS_3"/>
    <property type="match status" value="1"/>
</dbReference>
<organism>
    <name type="scientific">Campylobacter hominis (strain ATCC BAA-381 / DSM 21671 / CCUG 45161 / LMG 19568 / NCTC 13146 / CH001A)</name>
    <dbReference type="NCBI Taxonomy" id="360107"/>
    <lineage>
        <taxon>Bacteria</taxon>
        <taxon>Pseudomonadati</taxon>
        <taxon>Campylobacterota</taxon>
        <taxon>Epsilonproteobacteria</taxon>
        <taxon>Campylobacterales</taxon>
        <taxon>Campylobacteraceae</taxon>
        <taxon>Campylobacter</taxon>
    </lineage>
</organism>
<gene>
    <name evidence="1" type="primary">hemL</name>
    <name type="ordered locus">CHAB381_1034</name>
</gene>
<sequence>MSNHKEFSEALKVIPGGVDSPVRAFKNVGSEPFMVQKGKGAYIYDIEGNKYLDFVQSWGPLIFGHADKDIQDAVIKTAKSGLSFGASSPLETKLAKLILSKFDWLDKIRFVSSGTEATMSAIRLARGFSGKDKIIKFEGCYHGHSDSLLVKAGSGATTFGSSSSAGVPEDTAKNTYLAIYNDIDSVKNIVEKEDIGTIIIEPIAGNMGLVPADKEFLIKLRKICDEKKIVLILDEVMSGFRAGELGSYGIYGIKGDIVTFGKVIGGGMNVAAFAGKKEIMDMISPLGPVYQAGTLSGNPVSMAAGIASLTKIFASRNLYTKLENLANMFMIGLKNIAKNHGIAIQVAVRGSMFGYFFTDKAVKNYNDALSADTKMFAKFHSGMIKEGIFLAPSQFETGFICDAMSEKEINFALKKANKVFDEISKDSAKKANKTKICSKKTVKKSVKNKK</sequence>
<name>GSA_CAMHC</name>
<proteinExistence type="inferred from homology"/>
<keyword id="KW-0963">Cytoplasm</keyword>
<keyword id="KW-0413">Isomerase</keyword>
<keyword id="KW-0627">Porphyrin biosynthesis</keyword>
<keyword id="KW-0663">Pyridoxal phosphate</keyword>
<keyword id="KW-1185">Reference proteome</keyword>
<comment type="catalytic activity">
    <reaction evidence="1">
        <text>(S)-4-amino-5-oxopentanoate = 5-aminolevulinate</text>
        <dbReference type="Rhea" id="RHEA:14265"/>
        <dbReference type="ChEBI" id="CHEBI:57501"/>
        <dbReference type="ChEBI" id="CHEBI:356416"/>
        <dbReference type="EC" id="5.4.3.8"/>
    </reaction>
</comment>
<comment type="cofactor">
    <cofactor evidence="1">
        <name>pyridoxal 5'-phosphate</name>
        <dbReference type="ChEBI" id="CHEBI:597326"/>
    </cofactor>
</comment>
<comment type="pathway">
    <text evidence="1">Porphyrin-containing compound metabolism; protoporphyrin-IX biosynthesis; 5-aminolevulinate from L-glutamyl-tRNA(Glu): step 2/2.</text>
</comment>
<comment type="subunit">
    <text evidence="1">Homodimer.</text>
</comment>
<comment type="subcellular location">
    <subcellularLocation>
        <location evidence="1">Cytoplasm</location>
    </subcellularLocation>
</comment>
<comment type="similarity">
    <text evidence="1">Belongs to the class-III pyridoxal-phosphate-dependent aminotransferase family. HemL subfamily.</text>
</comment>
<evidence type="ECO:0000255" key="1">
    <source>
        <dbReference type="HAMAP-Rule" id="MF_00375"/>
    </source>
</evidence>
<protein>
    <recommendedName>
        <fullName evidence="1">Glutamate-1-semialdehyde 2,1-aminomutase</fullName>
        <shortName evidence="1">GSA</shortName>
        <ecNumber evidence="1">5.4.3.8</ecNumber>
    </recommendedName>
    <alternativeName>
        <fullName evidence="1">Glutamate-1-semialdehyde aminotransferase</fullName>
        <shortName evidence="1">GSA-AT</shortName>
    </alternativeName>
</protein>
<feature type="chain" id="PRO_1000059981" description="Glutamate-1-semialdehyde 2,1-aminomutase">
    <location>
        <begin position="1"/>
        <end position="450"/>
    </location>
</feature>
<feature type="modified residue" description="N6-(pyridoxal phosphate)lysine" evidence="1">
    <location>
        <position position="262"/>
    </location>
</feature>
<reference key="1">
    <citation type="submission" date="2007-07" db="EMBL/GenBank/DDBJ databases">
        <title>Complete genome sequence of Campylobacter hominis ATCC BAA-381, a commensal isolated from the human gastrointestinal tract.</title>
        <authorList>
            <person name="Fouts D.E."/>
            <person name="Mongodin E.F."/>
            <person name="Puiu D."/>
            <person name="Sebastian Y."/>
            <person name="Miller W.G."/>
            <person name="Mandrell R.E."/>
            <person name="Nelson K.E."/>
        </authorList>
    </citation>
    <scope>NUCLEOTIDE SEQUENCE [LARGE SCALE GENOMIC DNA]</scope>
    <source>
        <strain>ATCC BAA-381 / DSM 21671 / CCUG 45161 / LMG 19568 / NCTC 13146 / CH001A</strain>
    </source>
</reference>
<accession>A7I252</accession>